<reference key="1">
    <citation type="journal article" date="1985" name="EMBO J.">
        <title>Genes for the alpha and gamma subunits of mouse nerve growth factor are contiguous.</title>
        <authorList>
            <person name="Evans B.A."/>
            <person name="Richards R.I."/>
        </authorList>
    </citation>
    <scope>NUCLEOTIDE SEQUENCE [GENOMIC DNA]</scope>
</reference>
<reference key="2">
    <citation type="journal article" date="1988" name="Nucleic Acids Res.">
        <title>Sequence of mGK-11, a mouse glandular kallikrein gene.</title>
        <authorList>
            <person name="Drinkwater C.C."/>
            <person name="Richards R.I."/>
        </authorList>
    </citation>
    <scope>NUCLEOTIDE SEQUENCE [GENOMIC DNA]</scope>
    <source>
        <strain>BALB/cJ</strain>
        <tissue>Liver</tissue>
    </source>
</reference>
<reference key="3">
    <citation type="journal article" date="2004" name="Genome Res.">
        <title>The status, quality, and expansion of the NIH full-length cDNA project: the Mammalian Gene Collection (MGC).</title>
        <authorList>
            <consortium name="The MGC Project Team"/>
        </authorList>
    </citation>
    <scope>NUCLEOTIDE SEQUENCE [LARGE SCALE MRNA]</scope>
    <source>
        <strain>FVB/N</strain>
        <tissue>Salivary gland</tissue>
    </source>
</reference>
<reference key="4">
    <citation type="journal article" date="1987" name="J. Biol. Chem.">
        <title>Mouse glandular kallikrein genes. Structure and partial sequence analysis of the kallikrein gene locus.</title>
        <authorList>
            <person name="Evans B.A."/>
            <person name="Drinkwater C.C."/>
            <person name="Richards R.I."/>
        </authorList>
    </citation>
    <scope>NUCLEOTIDE SEQUENCE [GENOMIC DNA] OF 16-54 AND 69-122</scope>
</reference>
<keyword id="KW-1015">Disulfide bond</keyword>
<keyword id="KW-0325">Glycoprotein</keyword>
<keyword id="KW-0378">Hydrolase</keyword>
<keyword id="KW-0645">Protease</keyword>
<keyword id="KW-1185">Reference proteome</keyword>
<keyword id="KW-0720">Serine protease</keyword>
<keyword id="KW-0732">Signal</keyword>
<keyword id="KW-0865">Zymogen</keyword>
<dbReference type="EC" id="3.4.21.35"/>
<dbReference type="EMBL" id="X13215">
    <property type="protein sequence ID" value="CAA31604.3"/>
    <property type="molecule type" value="Genomic_DNA"/>
</dbReference>
<dbReference type="EMBL" id="X13216">
    <property type="protein sequence ID" value="CAA31604.3"/>
    <property type="status" value="JOINED"/>
    <property type="molecule type" value="Genomic_DNA"/>
</dbReference>
<dbReference type="EMBL" id="X13217">
    <property type="protein sequence ID" value="CAA31604.3"/>
    <property type="status" value="JOINED"/>
    <property type="molecule type" value="Genomic_DNA"/>
</dbReference>
<dbReference type="EMBL" id="X13218">
    <property type="protein sequence ID" value="CAA31604.3"/>
    <property type="status" value="JOINED"/>
    <property type="molecule type" value="Genomic_DNA"/>
</dbReference>
<dbReference type="EMBL" id="BC013660">
    <property type="protein sequence ID" value="AAH13660.1"/>
    <property type="molecule type" value="mRNA"/>
</dbReference>
<dbReference type="EMBL" id="M18590">
    <property type="protein sequence ID" value="AAA39352.1"/>
    <property type="status" value="ALT_SEQ"/>
    <property type="molecule type" value="Genomic_DNA"/>
</dbReference>
<dbReference type="EMBL" id="M18610">
    <property type="protein sequence ID" value="AAA39353.1"/>
    <property type="molecule type" value="Genomic_DNA"/>
</dbReference>
<dbReference type="CCDS" id="CCDS21192.1"/>
<dbReference type="PIR" id="I70022">
    <property type="entry name" value="I70022"/>
</dbReference>
<dbReference type="PIR" id="S01971">
    <property type="entry name" value="S01971"/>
</dbReference>
<dbReference type="RefSeq" id="NP_034770.1">
    <property type="nucleotide sequence ID" value="NM_010640.2"/>
</dbReference>
<dbReference type="SMR" id="P15946"/>
<dbReference type="FunCoup" id="P15946">
    <property type="interactions" value="75"/>
</dbReference>
<dbReference type="STRING" id="10090.ENSMUSP00000007156"/>
<dbReference type="MEROPS" id="S01.041"/>
<dbReference type="GlyCosmos" id="P15946">
    <property type="glycosylation" value="1 site, No reported glycans"/>
</dbReference>
<dbReference type="GlyGen" id="P15946">
    <property type="glycosylation" value="1 site"/>
</dbReference>
<dbReference type="PaxDb" id="10090-ENSMUSP00000007156"/>
<dbReference type="PeptideAtlas" id="P15946"/>
<dbReference type="ProteomicsDB" id="269438"/>
<dbReference type="DNASU" id="16613"/>
<dbReference type="Ensembl" id="ENSMUST00000007156.5">
    <property type="protein sequence ID" value="ENSMUSP00000007156.5"/>
    <property type="gene ID" value="ENSMUSG00000044485.5"/>
</dbReference>
<dbReference type="GeneID" id="16613"/>
<dbReference type="KEGG" id="mmu:16613"/>
<dbReference type="UCSC" id="uc009goe.1">
    <property type="organism name" value="mouse"/>
</dbReference>
<dbReference type="AGR" id="MGI:892023"/>
<dbReference type="CTD" id="16613"/>
<dbReference type="MGI" id="MGI:892023">
    <property type="gene designation" value="Klk1b11"/>
</dbReference>
<dbReference type="VEuPathDB" id="HostDB:ENSMUSG00000044485"/>
<dbReference type="eggNOG" id="KOG3627">
    <property type="taxonomic scope" value="Eukaryota"/>
</dbReference>
<dbReference type="GeneTree" id="ENSGT01020000230389"/>
<dbReference type="HOGENOM" id="CLU_006842_1_1_1"/>
<dbReference type="InParanoid" id="P15946"/>
<dbReference type="OMA" id="IGGWECE"/>
<dbReference type="OrthoDB" id="10061449at2759"/>
<dbReference type="PhylomeDB" id="P15946"/>
<dbReference type="TreeFam" id="TF331065"/>
<dbReference type="BRENDA" id="3.4.21.B42">
    <property type="organism ID" value="3474"/>
</dbReference>
<dbReference type="Reactome" id="R-MMU-1592389">
    <property type="pathway name" value="Activation of Matrix Metalloproteinases"/>
</dbReference>
<dbReference type="BioGRID-ORCS" id="16613">
    <property type="hits" value="3 hits in 79 CRISPR screens"/>
</dbReference>
<dbReference type="ChiTaRS" id="Klk1b11">
    <property type="organism name" value="mouse"/>
</dbReference>
<dbReference type="PRO" id="PR:P15946"/>
<dbReference type="Proteomes" id="UP000000589">
    <property type="component" value="Chromosome 7"/>
</dbReference>
<dbReference type="RNAct" id="P15946">
    <property type="molecule type" value="protein"/>
</dbReference>
<dbReference type="Bgee" id="ENSMUSG00000044485">
    <property type="expression patterns" value="Expressed in submandibular gland and 14 other cell types or tissues"/>
</dbReference>
<dbReference type="ExpressionAtlas" id="P15946">
    <property type="expression patterns" value="baseline and differential"/>
</dbReference>
<dbReference type="GO" id="GO:0004252">
    <property type="term" value="F:serine-type endopeptidase activity"/>
    <property type="evidence" value="ECO:0007669"/>
    <property type="project" value="UniProtKB-EC"/>
</dbReference>
<dbReference type="GO" id="GO:0006508">
    <property type="term" value="P:proteolysis"/>
    <property type="evidence" value="ECO:0007669"/>
    <property type="project" value="UniProtKB-KW"/>
</dbReference>
<dbReference type="CDD" id="cd00190">
    <property type="entry name" value="Tryp_SPc"/>
    <property type="match status" value="1"/>
</dbReference>
<dbReference type="FunFam" id="2.40.10.10:FF:000032">
    <property type="entry name" value="Kallikrein 1-related peptidase C9"/>
    <property type="match status" value="1"/>
</dbReference>
<dbReference type="FunFam" id="2.40.10.10:FF:000042">
    <property type="entry name" value="Kallikrein 1-related peptidase C9"/>
    <property type="match status" value="1"/>
</dbReference>
<dbReference type="Gene3D" id="2.40.10.10">
    <property type="entry name" value="Trypsin-like serine proteases"/>
    <property type="match status" value="2"/>
</dbReference>
<dbReference type="InterPro" id="IPR009003">
    <property type="entry name" value="Peptidase_S1_PA"/>
</dbReference>
<dbReference type="InterPro" id="IPR043504">
    <property type="entry name" value="Peptidase_S1_PA_chymotrypsin"/>
</dbReference>
<dbReference type="InterPro" id="IPR001314">
    <property type="entry name" value="Peptidase_S1A"/>
</dbReference>
<dbReference type="InterPro" id="IPR001254">
    <property type="entry name" value="Trypsin_dom"/>
</dbReference>
<dbReference type="InterPro" id="IPR018114">
    <property type="entry name" value="TRYPSIN_HIS"/>
</dbReference>
<dbReference type="InterPro" id="IPR033116">
    <property type="entry name" value="TRYPSIN_SER"/>
</dbReference>
<dbReference type="PANTHER" id="PTHR24271:SF47">
    <property type="entry name" value="KALLIKREIN-1"/>
    <property type="match status" value="1"/>
</dbReference>
<dbReference type="PANTHER" id="PTHR24271">
    <property type="entry name" value="KALLIKREIN-RELATED"/>
    <property type="match status" value="1"/>
</dbReference>
<dbReference type="Pfam" id="PF00089">
    <property type="entry name" value="Trypsin"/>
    <property type="match status" value="1"/>
</dbReference>
<dbReference type="PRINTS" id="PR00722">
    <property type="entry name" value="CHYMOTRYPSIN"/>
</dbReference>
<dbReference type="SMART" id="SM00020">
    <property type="entry name" value="Tryp_SPc"/>
    <property type="match status" value="1"/>
</dbReference>
<dbReference type="SUPFAM" id="SSF50494">
    <property type="entry name" value="Trypsin-like serine proteases"/>
    <property type="match status" value="1"/>
</dbReference>
<dbReference type="PROSITE" id="PS50240">
    <property type="entry name" value="TRYPSIN_DOM"/>
    <property type="match status" value="1"/>
</dbReference>
<dbReference type="PROSITE" id="PS00134">
    <property type="entry name" value="TRYPSIN_HIS"/>
    <property type="match status" value="1"/>
</dbReference>
<dbReference type="PROSITE" id="PS00135">
    <property type="entry name" value="TRYPSIN_SER"/>
    <property type="match status" value="1"/>
</dbReference>
<organism>
    <name type="scientific">Mus musculus</name>
    <name type="common">Mouse</name>
    <dbReference type="NCBI Taxonomy" id="10090"/>
    <lineage>
        <taxon>Eukaryota</taxon>
        <taxon>Metazoa</taxon>
        <taxon>Chordata</taxon>
        <taxon>Craniata</taxon>
        <taxon>Vertebrata</taxon>
        <taxon>Euteleostomi</taxon>
        <taxon>Mammalia</taxon>
        <taxon>Eutheria</taxon>
        <taxon>Euarchontoglires</taxon>
        <taxon>Glires</taxon>
        <taxon>Rodentia</taxon>
        <taxon>Myomorpha</taxon>
        <taxon>Muroidea</taxon>
        <taxon>Muridae</taxon>
        <taxon>Murinae</taxon>
        <taxon>Mus</taxon>
        <taxon>Mus</taxon>
    </lineage>
</organism>
<sequence length="261" mass="28727">MWFLILFLALSLGGIDAAPPVQSRIVGGFNCEKNSQPWHVAVYRYNKYICGGVLLDRNWVLTAAHCHVSQYNVWLGKTKLFQREPSAQHRMVSKSFPHPDYNMSLLIIHNPEPEDDESNDLMLLRLSEPADITDAVKPIALPTEEPKLGSTCLVSGWGSITPTKFQTPDDLQCVSIKLLPNEVCVKNHNQKVTDVMLCAGEMGGGKDTCKGDSGGPLICDGVLHGITAWGPIPCGKPNTPGVYTKLIKFTNWIKDTMAKNP</sequence>
<protein>
    <recommendedName>
        <fullName>Kallikrein 1-related peptidase b11</fullName>
        <ecNumber>3.4.21.35</ecNumber>
    </recommendedName>
    <alternativeName>
        <fullName>Glandular kallikrein K11</fullName>
        <shortName>mGK-11</shortName>
    </alternativeName>
    <alternativeName>
        <fullName>Tissue kallikrein-11</fullName>
    </alternativeName>
</protein>
<proteinExistence type="evidence at transcript level"/>
<feature type="signal peptide" evidence="2">
    <location>
        <begin position="1"/>
        <end position="18"/>
    </location>
</feature>
<feature type="propeptide" id="PRO_0000027981" description="Activation peptide" evidence="2">
    <location>
        <begin position="19"/>
        <end position="24"/>
    </location>
</feature>
<feature type="chain" id="PRO_0000027982" description="Kallikrein 1-related peptidase b11">
    <location>
        <begin position="25"/>
        <end position="261"/>
    </location>
</feature>
<feature type="domain" description="Peptidase S1" evidence="1">
    <location>
        <begin position="25"/>
        <end position="258"/>
    </location>
</feature>
<feature type="active site" description="Charge relay system">
    <location>
        <position position="65"/>
    </location>
</feature>
<feature type="active site" description="Charge relay system">
    <location>
        <position position="120"/>
    </location>
</feature>
<feature type="active site" description="Charge relay system">
    <location>
        <position position="213"/>
    </location>
</feature>
<feature type="glycosylation site" description="N-linked (GlcNAc...) asparagine" evidence="2">
    <location>
        <position position="102"/>
    </location>
</feature>
<feature type="disulfide bond" evidence="1">
    <location>
        <begin position="31"/>
        <end position="173"/>
    </location>
</feature>
<feature type="disulfide bond" evidence="1">
    <location>
        <begin position="50"/>
        <end position="66"/>
    </location>
</feature>
<feature type="disulfide bond" evidence="1">
    <location>
        <begin position="152"/>
        <end position="219"/>
    </location>
</feature>
<feature type="disulfide bond" evidence="1">
    <location>
        <begin position="184"/>
        <end position="198"/>
    </location>
</feature>
<feature type="disulfide bond" evidence="1">
    <location>
        <begin position="209"/>
        <end position="234"/>
    </location>
</feature>
<gene>
    <name type="primary">Klk1b11</name>
    <name type="synonym">Klk-11</name>
    <name type="synonym">Klk11</name>
</gene>
<accession>P15946</accession>
<evidence type="ECO:0000255" key="1">
    <source>
        <dbReference type="PROSITE-ProRule" id="PRU00274"/>
    </source>
</evidence>
<evidence type="ECO:0000305" key="2"/>
<name>K1B11_MOUSE</name>
<comment type="function">
    <text>Glandular kallikreins cleave Met-Lys and Arg-Ser bonds in kininogen to release Lys-bradykinin.</text>
</comment>
<comment type="catalytic activity">
    <reaction>
        <text>Preferential cleavage of Arg-|-Xaa bonds in small molecule substrates. Highly selective action to release kallidin (lysyl-bradykinin) from kininogen involves hydrolysis of Met-|-Xaa or Leu-|-Xaa.</text>
        <dbReference type="EC" id="3.4.21.35"/>
    </reaction>
</comment>
<comment type="similarity">
    <text evidence="1">Belongs to the peptidase S1 family. Kallikrein subfamily.</text>
</comment>